<gene>
    <name evidence="1" type="primary">ppc</name>
    <name type="ordered locus">Pmen_3360</name>
</gene>
<keyword id="KW-0120">Carbon dioxide fixation</keyword>
<keyword id="KW-0456">Lyase</keyword>
<keyword id="KW-0460">Magnesium</keyword>
<proteinExistence type="inferred from homology"/>
<organism>
    <name type="scientific">Ectopseudomonas mendocina (strain ymp)</name>
    <name type="common">Pseudomonas mendocina</name>
    <dbReference type="NCBI Taxonomy" id="399739"/>
    <lineage>
        <taxon>Bacteria</taxon>
        <taxon>Pseudomonadati</taxon>
        <taxon>Pseudomonadota</taxon>
        <taxon>Gammaproteobacteria</taxon>
        <taxon>Pseudomonadales</taxon>
        <taxon>Pseudomonadaceae</taxon>
        <taxon>Ectopseudomonas</taxon>
    </lineage>
</organism>
<evidence type="ECO:0000255" key="1">
    <source>
        <dbReference type="HAMAP-Rule" id="MF_00595"/>
    </source>
</evidence>
<accession>A4XXP6</accession>
<dbReference type="EC" id="4.1.1.31" evidence="1"/>
<dbReference type="EMBL" id="CP000680">
    <property type="protein sequence ID" value="ABP86112.1"/>
    <property type="molecule type" value="Genomic_DNA"/>
</dbReference>
<dbReference type="SMR" id="A4XXP6"/>
<dbReference type="STRING" id="399739.Pmen_3360"/>
<dbReference type="KEGG" id="pmy:Pmen_3360"/>
<dbReference type="PATRIC" id="fig|399739.8.peg.3410"/>
<dbReference type="eggNOG" id="COG2352">
    <property type="taxonomic scope" value="Bacteria"/>
</dbReference>
<dbReference type="HOGENOM" id="CLU_006557_2_0_6"/>
<dbReference type="OrthoDB" id="9768133at2"/>
<dbReference type="GO" id="GO:0005829">
    <property type="term" value="C:cytosol"/>
    <property type="evidence" value="ECO:0007669"/>
    <property type="project" value="TreeGrafter"/>
</dbReference>
<dbReference type="GO" id="GO:0000287">
    <property type="term" value="F:magnesium ion binding"/>
    <property type="evidence" value="ECO:0007669"/>
    <property type="project" value="UniProtKB-UniRule"/>
</dbReference>
<dbReference type="GO" id="GO:0008964">
    <property type="term" value="F:phosphoenolpyruvate carboxylase activity"/>
    <property type="evidence" value="ECO:0007669"/>
    <property type="project" value="UniProtKB-UniRule"/>
</dbReference>
<dbReference type="GO" id="GO:0015977">
    <property type="term" value="P:carbon fixation"/>
    <property type="evidence" value="ECO:0007669"/>
    <property type="project" value="UniProtKB-UniRule"/>
</dbReference>
<dbReference type="GO" id="GO:0006107">
    <property type="term" value="P:oxaloacetate metabolic process"/>
    <property type="evidence" value="ECO:0007669"/>
    <property type="project" value="UniProtKB-UniRule"/>
</dbReference>
<dbReference type="GO" id="GO:0006099">
    <property type="term" value="P:tricarboxylic acid cycle"/>
    <property type="evidence" value="ECO:0007669"/>
    <property type="project" value="InterPro"/>
</dbReference>
<dbReference type="Gene3D" id="1.20.1440.90">
    <property type="entry name" value="Phosphoenolpyruvate/pyruvate domain"/>
    <property type="match status" value="1"/>
</dbReference>
<dbReference type="HAMAP" id="MF_00595">
    <property type="entry name" value="PEPcase_type1"/>
    <property type="match status" value="1"/>
</dbReference>
<dbReference type="InterPro" id="IPR021135">
    <property type="entry name" value="PEP_COase"/>
</dbReference>
<dbReference type="InterPro" id="IPR022805">
    <property type="entry name" value="PEP_COase_bac/pln-type"/>
</dbReference>
<dbReference type="InterPro" id="IPR018129">
    <property type="entry name" value="PEP_COase_Lys_AS"/>
</dbReference>
<dbReference type="InterPro" id="IPR033129">
    <property type="entry name" value="PEPCASE_His_AS"/>
</dbReference>
<dbReference type="InterPro" id="IPR015813">
    <property type="entry name" value="Pyrv/PenolPyrv_kinase-like_dom"/>
</dbReference>
<dbReference type="NCBIfam" id="NF000584">
    <property type="entry name" value="PRK00009.1"/>
    <property type="match status" value="1"/>
</dbReference>
<dbReference type="PANTHER" id="PTHR30523">
    <property type="entry name" value="PHOSPHOENOLPYRUVATE CARBOXYLASE"/>
    <property type="match status" value="1"/>
</dbReference>
<dbReference type="PANTHER" id="PTHR30523:SF6">
    <property type="entry name" value="PHOSPHOENOLPYRUVATE CARBOXYLASE"/>
    <property type="match status" value="1"/>
</dbReference>
<dbReference type="Pfam" id="PF00311">
    <property type="entry name" value="PEPcase"/>
    <property type="match status" value="1"/>
</dbReference>
<dbReference type="PRINTS" id="PR00150">
    <property type="entry name" value="PEPCARBXLASE"/>
</dbReference>
<dbReference type="SUPFAM" id="SSF51621">
    <property type="entry name" value="Phosphoenolpyruvate/pyruvate domain"/>
    <property type="match status" value="1"/>
</dbReference>
<dbReference type="PROSITE" id="PS00781">
    <property type="entry name" value="PEPCASE_1"/>
    <property type="match status" value="1"/>
</dbReference>
<dbReference type="PROSITE" id="PS00393">
    <property type="entry name" value="PEPCASE_2"/>
    <property type="match status" value="1"/>
</dbReference>
<name>CAPP_ECTM1</name>
<comment type="function">
    <text evidence="1">Forms oxaloacetate, a four-carbon dicarboxylic acid source for the tricarboxylic acid cycle.</text>
</comment>
<comment type="catalytic activity">
    <reaction evidence="1">
        <text>oxaloacetate + phosphate = phosphoenolpyruvate + hydrogencarbonate</text>
        <dbReference type="Rhea" id="RHEA:28370"/>
        <dbReference type="ChEBI" id="CHEBI:16452"/>
        <dbReference type="ChEBI" id="CHEBI:17544"/>
        <dbReference type="ChEBI" id="CHEBI:43474"/>
        <dbReference type="ChEBI" id="CHEBI:58702"/>
        <dbReference type="EC" id="4.1.1.31"/>
    </reaction>
</comment>
<comment type="cofactor">
    <cofactor evidence="1">
        <name>Mg(2+)</name>
        <dbReference type="ChEBI" id="CHEBI:18420"/>
    </cofactor>
</comment>
<comment type="similarity">
    <text evidence="1">Belongs to the PEPCase type 1 family.</text>
</comment>
<sequence>MAEIDARLREEVHLLGELLGQTIRTQLGDDFLDKIERIRKGAKAGRRGSAAGAEQLTSTLGDLGDDELLPVARAFNQFLNLANIAEQQHRVRRRRPDEPEPFELRVLDELLERLLAAGQKPDELARQLGRLDIELVLTAHPTEVARRTLIQKYDAIAAQLTALDHSDLLPAERERIAQRLQRLIAEAWHTEEIRRSRPSPVDEAKWGFAVIEHSLWQAVPQFLRRADRSLQAATGLRLPLEAAPIRFASWMGGDRDGNPNVTARVTREVLLLARWMAADLYLRDVDQLAAELSMQQASAELRAQVGDSAEPYRALLKQLRERLRETRSWAQQALTADIAPGAAVLQDNHDLLAPLQLCYQSLHACGMGVIADGPLLDCLRRAATFGLFLVRLDVRQDSTRHAAALSEITDYLGLGRYAEWDEEQRLAFLQRELDSRRPLLPSDYRPSADTAEVLATCREVAAAPAAALGSYVISMAGAASDVLAVQLLLKEAGLRRPMRVVPLFETLADLDNAGPVIDRLLGLPGYRVRLHGPQEVMIGYSDSAKDAGTTAAAWAQYRAQEELVRLCGEHQVELLLFHGRGGTVGRGGGPAHAAILSQPPGSVAGRFRTTEQGEMIRFKFGLPDIAEQNLNLYLAAVLEATLLPPPAPEPSWRAMMDRLADVGVKAYRGVVREHPQFVAYFRQATPEQELGRLPLGSRPAKRREGGVESLRAIPWIFAWTQTRLMLPAWLGWEQALGQALAGGEGELLKNMREQWPFFRTRIDMLEMVLAKADASIAALYDQRLVEPALQPLGAQLRDLLSQACAAVLELTGQSRLLAHSPETLESISVRNTYLDPLHLLQAELLARCRLRQQAPESPLEQALLVSVAGIAAGLRNTG</sequence>
<feature type="chain" id="PRO_1000025578" description="Phosphoenolpyruvate carboxylase">
    <location>
        <begin position="1"/>
        <end position="878"/>
    </location>
</feature>
<feature type="active site" evidence="1">
    <location>
        <position position="140"/>
    </location>
</feature>
<feature type="active site" evidence="1">
    <location>
        <position position="545"/>
    </location>
</feature>
<reference key="1">
    <citation type="submission" date="2007-04" db="EMBL/GenBank/DDBJ databases">
        <title>Complete sequence of Pseudomonas mendocina ymp.</title>
        <authorList>
            <consortium name="US DOE Joint Genome Institute"/>
            <person name="Copeland A."/>
            <person name="Lucas S."/>
            <person name="Lapidus A."/>
            <person name="Barry K."/>
            <person name="Glavina del Rio T."/>
            <person name="Dalin E."/>
            <person name="Tice H."/>
            <person name="Pitluck S."/>
            <person name="Kiss H."/>
            <person name="Brettin T."/>
            <person name="Detter J.C."/>
            <person name="Bruce D."/>
            <person name="Han C."/>
            <person name="Schmutz J."/>
            <person name="Larimer F."/>
            <person name="Land M."/>
            <person name="Hauser L."/>
            <person name="Kyrpides N."/>
            <person name="Mikhailova N."/>
            <person name="Hersman L."/>
            <person name="Dubois J."/>
            <person name="Maurice P."/>
            <person name="Richardson P."/>
        </authorList>
    </citation>
    <scope>NUCLEOTIDE SEQUENCE [LARGE SCALE GENOMIC DNA]</scope>
    <source>
        <strain>ymp</strain>
    </source>
</reference>
<protein>
    <recommendedName>
        <fullName evidence="1">Phosphoenolpyruvate carboxylase</fullName>
        <shortName evidence="1">PEPC</shortName>
        <shortName evidence="1">PEPCase</shortName>
        <ecNumber evidence="1">4.1.1.31</ecNumber>
    </recommendedName>
</protein>